<dbReference type="EC" id="3.5.1.5" evidence="1"/>
<dbReference type="EMBL" id="AL646052">
    <property type="protein sequence ID" value="CAD15737.1"/>
    <property type="molecule type" value="Genomic_DNA"/>
</dbReference>
<dbReference type="RefSeq" id="WP_011001970.1">
    <property type="nucleotide sequence ID" value="NC_003295.1"/>
</dbReference>
<dbReference type="SMR" id="Q8XXS8"/>
<dbReference type="STRING" id="267608.RSc2035"/>
<dbReference type="EnsemblBacteria" id="CAD15737">
    <property type="protein sequence ID" value="CAD15737"/>
    <property type="gene ID" value="RSc2035"/>
</dbReference>
<dbReference type="KEGG" id="rso:RSc2035"/>
<dbReference type="eggNOG" id="COG0831">
    <property type="taxonomic scope" value="Bacteria"/>
</dbReference>
<dbReference type="HOGENOM" id="CLU_145825_1_0_4"/>
<dbReference type="UniPathway" id="UPA00258">
    <property type="reaction ID" value="UER00370"/>
</dbReference>
<dbReference type="Proteomes" id="UP000001436">
    <property type="component" value="Chromosome"/>
</dbReference>
<dbReference type="GO" id="GO:0005737">
    <property type="term" value="C:cytoplasm"/>
    <property type="evidence" value="ECO:0007669"/>
    <property type="project" value="UniProtKB-SubCell"/>
</dbReference>
<dbReference type="GO" id="GO:0016151">
    <property type="term" value="F:nickel cation binding"/>
    <property type="evidence" value="ECO:0007669"/>
    <property type="project" value="InterPro"/>
</dbReference>
<dbReference type="GO" id="GO:0009039">
    <property type="term" value="F:urease activity"/>
    <property type="evidence" value="ECO:0007669"/>
    <property type="project" value="UniProtKB-UniRule"/>
</dbReference>
<dbReference type="GO" id="GO:0043419">
    <property type="term" value="P:urea catabolic process"/>
    <property type="evidence" value="ECO:0007669"/>
    <property type="project" value="UniProtKB-UniRule"/>
</dbReference>
<dbReference type="CDD" id="cd00390">
    <property type="entry name" value="Urease_gamma"/>
    <property type="match status" value="1"/>
</dbReference>
<dbReference type="Gene3D" id="3.30.280.10">
    <property type="entry name" value="Urease, gamma-like subunit"/>
    <property type="match status" value="1"/>
</dbReference>
<dbReference type="HAMAP" id="MF_00739">
    <property type="entry name" value="Urease_gamma"/>
    <property type="match status" value="1"/>
</dbReference>
<dbReference type="InterPro" id="IPR012010">
    <property type="entry name" value="Urease_gamma"/>
</dbReference>
<dbReference type="InterPro" id="IPR002026">
    <property type="entry name" value="Urease_gamma/gamma-beta_su"/>
</dbReference>
<dbReference type="InterPro" id="IPR036463">
    <property type="entry name" value="Urease_gamma_sf"/>
</dbReference>
<dbReference type="InterPro" id="IPR050069">
    <property type="entry name" value="Urease_subunit"/>
</dbReference>
<dbReference type="NCBIfam" id="NF009712">
    <property type="entry name" value="PRK13241.1"/>
    <property type="match status" value="1"/>
</dbReference>
<dbReference type="NCBIfam" id="TIGR00193">
    <property type="entry name" value="urease_gam"/>
    <property type="match status" value="1"/>
</dbReference>
<dbReference type="PANTHER" id="PTHR33569">
    <property type="entry name" value="UREASE"/>
    <property type="match status" value="1"/>
</dbReference>
<dbReference type="PANTHER" id="PTHR33569:SF1">
    <property type="entry name" value="UREASE"/>
    <property type="match status" value="1"/>
</dbReference>
<dbReference type="Pfam" id="PF00547">
    <property type="entry name" value="Urease_gamma"/>
    <property type="match status" value="1"/>
</dbReference>
<dbReference type="PIRSF" id="PIRSF001223">
    <property type="entry name" value="Urease_gamma"/>
    <property type="match status" value="1"/>
</dbReference>
<dbReference type="SUPFAM" id="SSF54111">
    <property type="entry name" value="Urease, gamma-subunit"/>
    <property type="match status" value="1"/>
</dbReference>
<sequence length="100" mass="10932">MELTPREKDKLLIFTAALLAERRQARGLKLNYPEAVALISAAIMEGARDGKTVADLMYYGTTILSRGDVMDGVAEMIPDIQVEATFPDGTKLVTVHQPIV</sequence>
<proteinExistence type="inferred from homology"/>
<evidence type="ECO:0000255" key="1">
    <source>
        <dbReference type="HAMAP-Rule" id="MF_00739"/>
    </source>
</evidence>
<organism>
    <name type="scientific">Ralstonia nicotianae (strain ATCC BAA-1114 / GMI1000)</name>
    <name type="common">Ralstonia solanacearum</name>
    <dbReference type="NCBI Taxonomy" id="267608"/>
    <lineage>
        <taxon>Bacteria</taxon>
        <taxon>Pseudomonadati</taxon>
        <taxon>Pseudomonadota</taxon>
        <taxon>Betaproteobacteria</taxon>
        <taxon>Burkholderiales</taxon>
        <taxon>Burkholderiaceae</taxon>
        <taxon>Ralstonia</taxon>
        <taxon>Ralstonia solanacearum species complex</taxon>
    </lineage>
</organism>
<keyword id="KW-0963">Cytoplasm</keyword>
<keyword id="KW-0378">Hydrolase</keyword>
<keyword id="KW-1185">Reference proteome</keyword>
<accession>Q8XXS8</accession>
<comment type="catalytic activity">
    <reaction evidence="1">
        <text>urea + 2 H2O + H(+) = hydrogencarbonate + 2 NH4(+)</text>
        <dbReference type="Rhea" id="RHEA:20557"/>
        <dbReference type="ChEBI" id="CHEBI:15377"/>
        <dbReference type="ChEBI" id="CHEBI:15378"/>
        <dbReference type="ChEBI" id="CHEBI:16199"/>
        <dbReference type="ChEBI" id="CHEBI:17544"/>
        <dbReference type="ChEBI" id="CHEBI:28938"/>
        <dbReference type="EC" id="3.5.1.5"/>
    </reaction>
</comment>
<comment type="pathway">
    <text evidence="1">Nitrogen metabolism; urea degradation; CO(2) and NH(3) from urea (urease route): step 1/1.</text>
</comment>
<comment type="subunit">
    <text evidence="1">Heterotrimer of UreA (gamma), UreB (beta) and UreC (alpha) subunits. Three heterotrimers associate to form the active enzyme.</text>
</comment>
<comment type="subcellular location">
    <subcellularLocation>
        <location evidence="1">Cytoplasm</location>
    </subcellularLocation>
</comment>
<comment type="similarity">
    <text evidence="1">Belongs to the urease gamma subunit family.</text>
</comment>
<reference key="1">
    <citation type="journal article" date="2002" name="Nature">
        <title>Genome sequence of the plant pathogen Ralstonia solanacearum.</title>
        <authorList>
            <person name="Salanoubat M."/>
            <person name="Genin S."/>
            <person name="Artiguenave F."/>
            <person name="Gouzy J."/>
            <person name="Mangenot S."/>
            <person name="Arlat M."/>
            <person name="Billault A."/>
            <person name="Brottier P."/>
            <person name="Camus J.-C."/>
            <person name="Cattolico L."/>
            <person name="Chandler M."/>
            <person name="Choisne N."/>
            <person name="Claudel-Renard C."/>
            <person name="Cunnac S."/>
            <person name="Demange N."/>
            <person name="Gaspin C."/>
            <person name="Lavie M."/>
            <person name="Moisan A."/>
            <person name="Robert C."/>
            <person name="Saurin W."/>
            <person name="Schiex T."/>
            <person name="Siguier P."/>
            <person name="Thebault P."/>
            <person name="Whalen M."/>
            <person name="Wincker P."/>
            <person name="Levy M."/>
            <person name="Weissenbach J."/>
            <person name="Boucher C.A."/>
        </authorList>
    </citation>
    <scope>NUCLEOTIDE SEQUENCE [LARGE SCALE GENOMIC DNA]</scope>
    <source>
        <strain>ATCC BAA-1114 / GMI1000</strain>
    </source>
</reference>
<gene>
    <name evidence="1" type="primary">ureA</name>
    <name type="ordered locus">RSc2035</name>
    <name type="ORF">RS03029</name>
</gene>
<name>URE3_RALN1</name>
<feature type="chain" id="PRO_0000098031" description="Urease subunit gamma">
    <location>
        <begin position="1"/>
        <end position="100"/>
    </location>
</feature>
<protein>
    <recommendedName>
        <fullName evidence="1">Urease subunit gamma</fullName>
        <ecNumber evidence="1">3.5.1.5</ecNumber>
    </recommendedName>
    <alternativeName>
        <fullName evidence="1">Urea amidohydrolase subunit gamma</fullName>
    </alternativeName>
</protein>